<organism>
    <name type="scientific">Brucella melitensis biotype 2 (strain ATCC 23457)</name>
    <dbReference type="NCBI Taxonomy" id="546272"/>
    <lineage>
        <taxon>Bacteria</taxon>
        <taxon>Pseudomonadati</taxon>
        <taxon>Pseudomonadota</taxon>
        <taxon>Alphaproteobacteria</taxon>
        <taxon>Hyphomicrobiales</taxon>
        <taxon>Brucellaceae</taxon>
        <taxon>Brucella/Ochrobactrum group</taxon>
        <taxon>Brucella</taxon>
    </lineage>
</organism>
<proteinExistence type="inferred from homology"/>
<accession>C0RJJ4</accession>
<keyword id="KW-0687">Ribonucleoprotein</keyword>
<keyword id="KW-0689">Ribosomal protein</keyword>
<keyword id="KW-0694">RNA-binding</keyword>
<keyword id="KW-0699">rRNA-binding</keyword>
<keyword id="KW-0820">tRNA-binding</keyword>
<reference key="1">
    <citation type="submission" date="2009-03" db="EMBL/GenBank/DDBJ databases">
        <title>Brucella melitensis ATCC 23457 whole genome shotgun sequencing project.</title>
        <authorList>
            <person name="Setubal J.C."/>
            <person name="Boyle S."/>
            <person name="Crasta O.R."/>
            <person name="Gillespie J.J."/>
            <person name="Kenyon R.W."/>
            <person name="Lu J."/>
            <person name="Mane S."/>
            <person name="Nagrani S."/>
            <person name="Shallom J.M."/>
            <person name="Shallom S."/>
            <person name="Shukla M."/>
            <person name="Snyder E.E."/>
            <person name="Sobral B.W."/>
            <person name="Wattam A.R."/>
            <person name="Will R."/>
            <person name="Williams K."/>
            <person name="Yoo H."/>
            <person name="Munk C."/>
            <person name="Tapia R."/>
            <person name="Han C."/>
            <person name="Detter J.C."/>
            <person name="Bruce D."/>
            <person name="Brettin T.S."/>
        </authorList>
    </citation>
    <scope>NUCLEOTIDE SEQUENCE [LARGE SCALE GENOMIC DNA]</scope>
    <source>
        <strain>ATCC 23457</strain>
    </source>
</reference>
<evidence type="ECO:0000255" key="1">
    <source>
        <dbReference type="HAMAP-Rule" id="MF_01342"/>
    </source>
</evidence>
<evidence type="ECO:0000305" key="2"/>
<protein>
    <recommendedName>
        <fullName evidence="1">Large ribosomal subunit protein uL16</fullName>
    </recommendedName>
    <alternativeName>
        <fullName evidence="2">50S ribosomal protein L16</fullName>
    </alternativeName>
</protein>
<name>RL16_BRUMB</name>
<comment type="function">
    <text evidence="1">Binds 23S rRNA and is also seen to make contacts with the A and possibly P site tRNAs.</text>
</comment>
<comment type="subunit">
    <text evidence="1">Part of the 50S ribosomal subunit.</text>
</comment>
<comment type="similarity">
    <text evidence="1">Belongs to the universal ribosomal protein uL16 family.</text>
</comment>
<dbReference type="EMBL" id="CP001488">
    <property type="protein sequence ID" value="ACO01002.1"/>
    <property type="molecule type" value="Genomic_DNA"/>
</dbReference>
<dbReference type="RefSeq" id="WP_002964355.1">
    <property type="nucleotide sequence ID" value="NC_012441.1"/>
</dbReference>
<dbReference type="SMR" id="C0RJJ4"/>
<dbReference type="GeneID" id="97533531"/>
<dbReference type="KEGG" id="bmi:BMEA_A1271"/>
<dbReference type="HOGENOM" id="CLU_078858_2_1_5"/>
<dbReference type="Proteomes" id="UP000001748">
    <property type="component" value="Chromosome I"/>
</dbReference>
<dbReference type="GO" id="GO:0022625">
    <property type="term" value="C:cytosolic large ribosomal subunit"/>
    <property type="evidence" value="ECO:0007669"/>
    <property type="project" value="TreeGrafter"/>
</dbReference>
<dbReference type="GO" id="GO:0019843">
    <property type="term" value="F:rRNA binding"/>
    <property type="evidence" value="ECO:0007669"/>
    <property type="project" value="UniProtKB-UniRule"/>
</dbReference>
<dbReference type="GO" id="GO:0003735">
    <property type="term" value="F:structural constituent of ribosome"/>
    <property type="evidence" value="ECO:0007669"/>
    <property type="project" value="InterPro"/>
</dbReference>
<dbReference type="GO" id="GO:0000049">
    <property type="term" value="F:tRNA binding"/>
    <property type="evidence" value="ECO:0007669"/>
    <property type="project" value="UniProtKB-KW"/>
</dbReference>
<dbReference type="GO" id="GO:0006412">
    <property type="term" value="P:translation"/>
    <property type="evidence" value="ECO:0007669"/>
    <property type="project" value="UniProtKB-UniRule"/>
</dbReference>
<dbReference type="CDD" id="cd01433">
    <property type="entry name" value="Ribosomal_L16_L10e"/>
    <property type="match status" value="1"/>
</dbReference>
<dbReference type="FunFam" id="3.90.1170.10:FF:000001">
    <property type="entry name" value="50S ribosomal protein L16"/>
    <property type="match status" value="1"/>
</dbReference>
<dbReference type="Gene3D" id="3.90.1170.10">
    <property type="entry name" value="Ribosomal protein L10e/L16"/>
    <property type="match status" value="1"/>
</dbReference>
<dbReference type="HAMAP" id="MF_01342">
    <property type="entry name" value="Ribosomal_uL16"/>
    <property type="match status" value="1"/>
</dbReference>
<dbReference type="InterPro" id="IPR047873">
    <property type="entry name" value="Ribosomal_uL16"/>
</dbReference>
<dbReference type="InterPro" id="IPR000114">
    <property type="entry name" value="Ribosomal_uL16_bact-type"/>
</dbReference>
<dbReference type="InterPro" id="IPR020798">
    <property type="entry name" value="Ribosomal_uL16_CS"/>
</dbReference>
<dbReference type="InterPro" id="IPR016180">
    <property type="entry name" value="Ribosomal_uL16_dom"/>
</dbReference>
<dbReference type="InterPro" id="IPR036920">
    <property type="entry name" value="Ribosomal_uL16_sf"/>
</dbReference>
<dbReference type="NCBIfam" id="TIGR01164">
    <property type="entry name" value="rplP_bact"/>
    <property type="match status" value="1"/>
</dbReference>
<dbReference type="PANTHER" id="PTHR12220">
    <property type="entry name" value="50S/60S RIBOSOMAL PROTEIN L16"/>
    <property type="match status" value="1"/>
</dbReference>
<dbReference type="PANTHER" id="PTHR12220:SF13">
    <property type="entry name" value="LARGE RIBOSOMAL SUBUNIT PROTEIN UL16M"/>
    <property type="match status" value="1"/>
</dbReference>
<dbReference type="Pfam" id="PF00252">
    <property type="entry name" value="Ribosomal_L16"/>
    <property type="match status" value="1"/>
</dbReference>
<dbReference type="PRINTS" id="PR00060">
    <property type="entry name" value="RIBOSOMALL16"/>
</dbReference>
<dbReference type="SUPFAM" id="SSF54686">
    <property type="entry name" value="Ribosomal protein L16p/L10e"/>
    <property type="match status" value="1"/>
</dbReference>
<dbReference type="PROSITE" id="PS00586">
    <property type="entry name" value="RIBOSOMAL_L16_1"/>
    <property type="match status" value="1"/>
</dbReference>
<dbReference type="PROSITE" id="PS00701">
    <property type="entry name" value="RIBOSOMAL_L16_2"/>
    <property type="match status" value="1"/>
</dbReference>
<feature type="chain" id="PRO_1000166341" description="Large ribosomal subunit protein uL16">
    <location>
        <begin position="1"/>
        <end position="137"/>
    </location>
</feature>
<sequence length="137" mass="15501">MMQPKRTKFRKQFKGRIHGNSKGGTDLNFGAFGLKALEPERVTARQIEAARRAITRHMKRAGRVWIRIFPDLPVTSKPTEVRMGKGKGSVDYWACRVAPGRVMFELDGVPEDVAREALRLGAAKLPIKTRFIQRIAE</sequence>
<gene>
    <name evidence="1" type="primary">rplP</name>
    <name type="ordered locus">BMEA_A1271</name>
</gene>